<feature type="chain" id="PRO_1000025023" description="Galactose-1-phosphate uridylyltransferase">
    <location>
        <begin position="1"/>
        <end position="486"/>
    </location>
</feature>
<evidence type="ECO:0000255" key="1">
    <source>
        <dbReference type="HAMAP-Rule" id="MF_00571"/>
    </source>
</evidence>
<gene>
    <name evidence="1" type="primary">galT</name>
    <name type="ordered locus">LSEI_0666</name>
</gene>
<reference key="1">
    <citation type="journal article" date="2006" name="Proc. Natl. Acad. Sci. U.S.A.">
        <title>Comparative genomics of the lactic acid bacteria.</title>
        <authorList>
            <person name="Makarova K.S."/>
            <person name="Slesarev A."/>
            <person name="Wolf Y.I."/>
            <person name="Sorokin A."/>
            <person name="Mirkin B."/>
            <person name="Koonin E.V."/>
            <person name="Pavlov A."/>
            <person name="Pavlova N."/>
            <person name="Karamychev V."/>
            <person name="Polouchine N."/>
            <person name="Shakhova V."/>
            <person name="Grigoriev I."/>
            <person name="Lou Y."/>
            <person name="Rohksar D."/>
            <person name="Lucas S."/>
            <person name="Huang K."/>
            <person name="Goodstein D.M."/>
            <person name="Hawkins T."/>
            <person name="Plengvidhya V."/>
            <person name="Welker D."/>
            <person name="Hughes J."/>
            <person name="Goh Y."/>
            <person name="Benson A."/>
            <person name="Baldwin K."/>
            <person name="Lee J.-H."/>
            <person name="Diaz-Muniz I."/>
            <person name="Dosti B."/>
            <person name="Smeianov V."/>
            <person name="Wechter W."/>
            <person name="Barabote R."/>
            <person name="Lorca G."/>
            <person name="Altermann E."/>
            <person name="Barrangou R."/>
            <person name="Ganesan B."/>
            <person name="Xie Y."/>
            <person name="Rawsthorne H."/>
            <person name="Tamir D."/>
            <person name="Parker C."/>
            <person name="Breidt F."/>
            <person name="Broadbent J.R."/>
            <person name="Hutkins R."/>
            <person name="O'Sullivan D."/>
            <person name="Steele J."/>
            <person name="Unlu G."/>
            <person name="Saier M.H. Jr."/>
            <person name="Klaenhammer T."/>
            <person name="Richardson P."/>
            <person name="Kozyavkin S."/>
            <person name="Weimer B.C."/>
            <person name="Mills D.A."/>
        </authorList>
    </citation>
    <scope>NUCLEOTIDE SEQUENCE [LARGE SCALE GENOMIC DNA]</scope>
    <source>
        <strain>ATCC 334 / BCRC 17002 / CCUG 31169 / CIP 107868 / KCTC 3260 / NRRL B-441</strain>
    </source>
</reference>
<comment type="catalytic activity">
    <reaction evidence="1">
        <text>alpha-D-galactose 1-phosphate + UDP-alpha-D-glucose = alpha-D-glucose 1-phosphate + UDP-alpha-D-galactose</text>
        <dbReference type="Rhea" id="RHEA:13989"/>
        <dbReference type="ChEBI" id="CHEBI:58336"/>
        <dbReference type="ChEBI" id="CHEBI:58601"/>
        <dbReference type="ChEBI" id="CHEBI:58885"/>
        <dbReference type="ChEBI" id="CHEBI:66914"/>
        <dbReference type="EC" id="2.7.7.12"/>
    </reaction>
</comment>
<comment type="pathway">
    <text evidence="1">Carbohydrate metabolism; galactose metabolism.</text>
</comment>
<comment type="subcellular location">
    <subcellularLocation>
        <location evidence="1">Cytoplasm</location>
    </subcellularLocation>
</comment>
<comment type="similarity">
    <text evidence="1">Belongs to the galactose-1-phosphate uridylyltransferase type 2 family.</text>
</comment>
<keyword id="KW-0119">Carbohydrate metabolism</keyword>
<keyword id="KW-0963">Cytoplasm</keyword>
<keyword id="KW-0299">Galactose metabolism</keyword>
<keyword id="KW-0548">Nucleotidyltransferase</keyword>
<keyword id="KW-1185">Reference proteome</keyword>
<keyword id="KW-0808">Transferase</keyword>
<organism>
    <name type="scientific">Lacticaseibacillus paracasei (strain ATCC 334 / BCRC 17002 / CCUG 31169 / CIP 107868 / KCTC 3260 / NRRL B-441)</name>
    <name type="common">Lactobacillus paracasei</name>
    <dbReference type="NCBI Taxonomy" id="321967"/>
    <lineage>
        <taxon>Bacteria</taxon>
        <taxon>Bacillati</taxon>
        <taxon>Bacillota</taxon>
        <taxon>Bacilli</taxon>
        <taxon>Lactobacillales</taxon>
        <taxon>Lactobacillaceae</taxon>
        <taxon>Lacticaseibacillus</taxon>
    </lineage>
</organism>
<name>GALT_LACP3</name>
<protein>
    <recommendedName>
        <fullName evidence="1">Galactose-1-phosphate uridylyltransferase</fullName>
        <shortName evidence="1">Gal-1-P uridylyltransferase</shortName>
        <ecNumber evidence="1">2.7.7.12</ecNumber>
    </recommendedName>
    <alternativeName>
        <fullName evidence="1">UDP-glucose--hexose-1-phosphate uridylyltransferase</fullName>
    </alternativeName>
</protein>
<accession>Q03BB6</accession>
<proteinExistence type="inferred from homology"/>
<dbReference type="EC" id="2.7.7.12" evidence="1"/>
<dbReference type="EMBL" id="CP000423">
    <property type="protein sequence ID" value="ABJ69506.1"/>
    <property type="molecule type" value="Genomic_DNA"/>
</dbReference>
<dbReference type="RefSeq" id="WP_011674229.1">
    <property type="nucleotide sequence ID" value="NC_008526.1"/>
</dbReference>
<dbReference type="RefSeq" id="YP_805948.1">
    <property type="nucleotide sequence ID" value="NC_008526.1"/>
</dbReference>
<dbReference type="STRING" id="321967.LSEI_0666"/>
<dbReference type="PaxDb" id="321967-LSEI_0666"/>
<dbReference type="KEGG" id="lca:LSEI_0666"/>
<dbReference type="PATRIC" id="fig|321967.11.peg.670"/>
<dbReference type="HOGENOM" id="CLU_047799_0_0_9"/>
<dbReference type="UniPathway" id="UPA00214"/>
<dbReference type="Proteomes" id="UP000001651">
    <property type="component" value="Chromosome"/>
</dbReference>
<dbReference type="GO" id="GO:0005737">
    <property type="term" value="C:cytoplasm"/>
    <property type="evidence" value="ECO:0007669"/>
    <property type="project" value="UniProtKB-SubCell"/>
</dbReference>
<dbReference type="GO" id="GO:0008108">
    <property type="term" value="F:UDP-glucose:hexose-1-phosphate uridylyltransferase activity"/>
    <property type="evidence" value="ECO:0007669"/>
    <property type="project" value="UniProtKB-UniRule"/>
</dbReference>
<dbReference type="GO" id="GO:0006012">
    <property type="term" value="P:galactose metabolic process"/>
    <property type="evidence" value="ECO:0007669"/>
    <property type="project" value="UniProtKB-UniRule"/>
</dbReference>
<dbReference type="HAMAP" id="MF_00571">
    <property type="entry name" value="GalP_UDP_trans"/>
    <property type="match status" value="1"/>
</dbReference>
<dbReference type="InterPro" id="IPR000766">
    <property type="entry name" value="GalP_uridyl_Trfase_II"/>
</dbReference>
<dbReference type="InterPro" id="IPR023425">
    <property type="entry name" value="GalP_uridyl_Trfase_II_CS"/>
</dbReference>
<dbReference type="InterPro" id="IPR005850">
    <property type="entry name" value="GalP_Utransf_C"/>
</dbReference>
<dbReference type="InterPro" id="IPR005849">
    <property type="entry name" value="GalP_Utransf_N"/>
</dbReference>
<dbReference type="NCBIfam" id="TIGR01239">
    <property type="entry name" value="galT_2"/>
    <property type="match status" value="1"/>
</dbReference>
<dbReference type="NCBIfam" id="NF003630">
    <property type="entry name" value="PRK05270.1-3"/>
    <property type="match status" value="1"/>
</dbReference>
<dbReference type="NCBIfam" id="NF003633">
    <property type="entry name" value="PRK05270.2-2"/>
    <property type="match status" value="1"/>
</dbReference>
<dbReference type="PANTHER" id="PTHR39191:SF1">
    <property type="entry name" value="DUF4922 DOMAIN-CONTAINING PROTEIN"/>
    <property type="match status" value="1"/>
</dbReference>
<dbReference type="PANTHER" id="PTHR39191">
    <property type="entry name" value="GALACTOSE-1-PHOSPHATE URIDYLYLTRANSFERASE"/>
    <property type="match status" value="1"/>
</dbReference>
<dbReference type="Pfam" id="PF02744">
    <property type="entry name" value="GalP_UDP_tr_C"/>
    <property type="match status" value="1"/>
</dbReference>
<dbReference type="Pfam" id="PF01087">
    <property type="entry name" value="GalP_UDP_transf"/>
    <property type="match status" value="1"/>
</dbReference>
<dbReference type="PIRSF" id="PIRSF006005">
    <property type="entry name" value="GalT_BS"/>
    <property type="match status" value="1"/>
</dbReference>
<dbReference type="PROSITE" id="PS01163">
    <property type="entry name" value="GAL_P_UDP_TRANSF_II"/>
    <property type="match status" value="1"/>
</dbReference>
<sequence>MTAISNHIDTIIKLNPDYTQMDAVYLTNKLLNLIGDAALELPGDTDPLTNLDLMVKAAQDNGKIPDSQAARQILEAQLMDFATPTPSRINQLFWDKYQAGPRVATDWFFALSRANNYIQTRAIAKNVVFPAKTEYGDLEITINLSKPEKDPKDIAAAAHATQSGYPACALCLQTEGYAGRTDFAARTNHRVIRFLLGGKTWGFQYSPYAYFNEHAIFLDAIHEPMVIDQSTFSNLLNIVTMFPTYFVGSNADLPIVGGSMLAHEHYQGGRHTFPMAKAPIETQVEISGHPHVFAGIVKWPMSVIRLVSADSDELINAAEHVRQVWNQYTDETVDVRAFVDGKPHHTVTPIARRVGTEFQLDLVLRDNQTSAQYPDGIFHPHQDVQHIKKENIGLIEVMGRAILPARLKSELAEVQKYLLGEANTMKPMHQAWADQLKAKYDWTPANAEIQMQAAVGRVFARVLEDAGVFKRDEVGQKAFARFCRAL</sequence>